<proteinExistence type="evidence at transcript level"/>
<organism>
    <name type="scientific">Pongo abelii</name>
    <name type="common">Sumatran orangutan</name>
    <name type="synonym">Pongo pygmaeus abelii</name>
    <dbReference type="NCBI Taxonomy" id="9601"/>
    <lineage>
        <taxon>Eukaryota</taxon>
        <taxon>Metazoa</taxon>
        <taxon>Chordata</taxon>
        <taxon>Craniata</taxon>
        <taxon>Vertebrata</taxon>
        <taxon>Euteleostomi</taxon>
        <taxon>Mammalia</taxon>
        <taxon>Eutheria</taxon>
        <taxon>Euarchontoglires</taxon>
        <taxon>Primates</taxon>
        <taxon>Haplorrhini</taxon>
        <taxon>Catarrhini</taxon>
        <taxon>Hominidae</taxon>
        <taxon>Pongo</taxon>
    </lineage>
</organism>
<evidence type="ECO:0000250" key="1">
    <source>
        <dbReference type="UniProtKB" id="Q9UJX5"/>
    </source>
</evidence>
<evidence type="ECO:0000305" key="2"/>
<gene>
    <name type="primary">ANAPC4</name>
</gene>
<comment type="function">
    <text evidence="1">Component of the anaphase promoting complex/cyclosome (APC/C), a cell cycle-regulated E3 ubiquitin ligase that controls progression through mitosis and the G1 phase of the cell cycle. The APC/C complex acts by mediating ubiquitination and subsequent degradation of target proteins: it mainly mediates the formation of 'Lys-11'-linked polyubiquitin chains and, to a lower extent, the formation of 'Lys-48'- and 'Lys-63'-linked polyubiquitin chains. The APC/C complex catalyzes assembly of branched 'Lys-11'-/'Lys-48'-linked branched ubiquitin chains on target proteins.</text>
</comment>
<comment type="pathway">
    <text evidence="1">Protein modification; protein ubiquitination.</text>
</comment>
<comment type="subunit">
    <text evidence="1">The mammalian APC/C is composed at least of 14 distinct subunits ANAPC1, ANAPC2, CDC27/APC3, ANAPC4, ANAPC5, CDC16/APC6, ANAPC7, CDC23/APC8, ANAPC10, ANAPC11, CDC26/APC12, ANAPC13, ANAPC15 and ANAPC16 that assemble into a complex of at least 19 chains with a combined molecular mass of around 1.2 MDa; APC/C interacts with FZR1 and FBXO5. In the context of the APC/C complex, directly interacts with UBE2S.</text>
</comment>
<comment type="subcellular location">
    <subcellularLocation>
        <location evidence="1">Nucleus</location>
    </subcellularLocation>
</comment>
<comment type="similarity">
    <text evidence="2">Belongs to the APC4 family.</text>
</comment>
<protein>
    <recommendedName>
        <fullName>Anaphase-promoting complex subunit 4</fullName>
        <shortName>APC4</shortName>
    </recommendedName>
    <alternativeName>
        <fullName>Cyclosome subunit 4</fullName>
    </alternativeName>
</protein>
<dbReference type="EMBL" id="CR858957">
    <property type="protein sequence ID" value="CAH91155.1"/>
    <property type="molecule type" value="mRNA"/>
</dbReference>
<dbReference type="RefSeq" id="NP_001125674.1">
    <property type="nucleotide sequence ID" value="NM_001132202.2"/>
</dbReference>
<dbReference type="SMR" id="Q5RAQ5"/>
<dbReference type="FunCoup" id="Q5RAQ5">
    <property type="interactions" value="3766"/>
</dbReference>
<dbReference type="STRING" id="9601.ENSPPYP00000016367"/>
<dbReference type="GeneID" id="100172595"/>
<dbReference type="KEGG" id="pon:100172595"/>
<dbReference type="CTD" id="29945"/>
<dbReference type="eggNOG" id="KOG4399">
    <property type="taxonomic scope" value="Eukaryota"/>
</dbReference>
<dbReference type="eggNOG" id="KOG4640">
    <property type="taxonomic scope" value="Eukaryota"/>
</dbReference>
<dbReference type="InParanoid" id="Q5RAQ5"/>
<dbReference type="OrthoDB" id="2110451at2759"/>
<dbReference type="UniPathway" id="UPA00143"/>
<dbReference type="Proteomes" id="UP000001595">
    <property type="component" value="Unplaced"/>
</dbReference>
<dbReference type="GO" id="GO:0005680">
    <property type="term" value="C:anaphase-promoting complex"/>
    <property type="evidence" value="ECO:0000250"/>
    <property type="project" value="UniProtKB"/>
</dbReference>
<dbReference type="GO" id="GO:0034399">
    <property type="term" value="C:nuclear periphery"/>
    <property type="evidence" value="ECO:0007669"/>
    <property type="project" value="TreeGrafter"/>
</dbReference>
<dbReference type="GO" id="GO:0005634">
    <property type="term" value="C:nucleus"/>
    <property type="evidence" value="ECO:0000250"/>
    <property type="project" value="UniProtKB"/>
</dbReference>
<dbReference type="GO" id="GO:0031145">
    <property type="term" value="P:anaphase-promoting complex-dependent catabolic process"/>
    <property type="evidence" value="ECO:0000250"/>
    <property type="project" value="UniProtKB"/>
</dbReference>
<dbReference type="GO" id="GO:0051301">
    <property type="term" value="P:cell division"/>
    <property type="evidence" value="ECO:0007669"/>
    <property type="project" value="UniProtKB-KW"/>
</dbReference>
<dbReference type="GO" id="GO:0141198">
    <property type="term" value="P:protein branched polyubiquitination"/>
    <property type="evidence" value="ECO:0000250"/>
    <property type="project" value="UniProtKB"/>
</dbReference>
<dbReference type="GO" id="GO:0070979">
    <property type="term" value="P:protein K11-linked ubiquitination"/>
    <property type="evidence" value="ECO:0000250"/>
    <property type="project" value="UniProtKB"/>
</dbReference>
<dbReference type="GO" id="GO:0070936">
    <property type="term" value="P:protein K48-linked ubiquitination"/>
    <property type="evidence" value="ECO:0000250"/>
    <property type="project" value="UniProtKB"/>
</dbReference>
<dbReference type="GO" id="GO:0030071">
    <property type="term" value="P:regulation of mitotic metaphase/anaphase transition"/>
    <property type="evidence" value="ECO:0007669"/>
    <property type="project" value="InterPro"/>
</dbReference>
<dbReference type="FunFam" id="2.130.10.10:FF:001243">
    <property type="entry name" value="Anaphase-promoting complex subunit 4"/>
    <property type="match status" value="1"/>
</dbReference>
<dbReference type="Gene3D" id="2.130.10.10">
    <property type="entry name" value="YVTN repeat-like/Quinoprotein amine dehydrogenase"/>
    <property type="match status" value="1"/>
</dbReference>
<dbReference type="InterPro" id="IPR024789">
    <property type="entry name" value="APC4"/>
</dbReference>
<dbReference type="InterPro" id="IPR024977">
    <property type="entry name" value="Apc4-like_WD40_dom"/>
</dbReference>
<dbReference type="InterPro" id="IPR056358">
    <property type="entry name" value="APC4_C"/>
</dbReference>
<dbReference type="InterPro" id="IPR024790">
    <property type="entry name" value="APC4_long_dom"/>
</dbReference>
<dbReference type="InterPro" id="IPR017169">
    <property type="entry name" value="APC4_metazoa"/>
</dbReference>
<dbReference type="InterPro" id="IPR015943">
    <property type="entry name" value="WD40/YVTN_repeat-like_dom_sf"/>
</dbReference>
<dbReference type="InterPro" id="IPR036322">
    <property type="entry name" value="WD40_repeat_dom_sf"/>
</dbReference>
<dbReference type="PANTHER" id="PTHR13260">
    <property type="entry name" value="ANAPHASE PROMOTING COMPLEX SUBUNIT 4 APC4"/>
    <property type="match status" value="1"/>
</dbReference>
<dbReference type="PANTHER" id="PTHR13260:SF0">
    <property type="entry name" value="ANAPHASE-PROMOTING COMPLEX SUBUNIT 4"/>
    <property type="match status" value="1"/>
</dbReference>
<dbReference type="Pfam" id="PF12896">
    <property type="entry name" value="ANAPC4"/>
    <property type="match status" value="1"/>
</dbReference>
<dbReference type="Pfam" id="PF12894">
    <property type="entry name" value="ANAPC4_WD40"/>
    <property type="match status" value="1"/>
</dbReference>
<dbReference type="Pfam" id="PF23405">
    <property type="entry name" value="WD40_APC4_C-half"/>
    <property type="match status" value="1"/>
</dbReference>
<dbReference type="PIRSF" id="PIRSF037303">
    <property type="entry name" value="APC4"/>
    <property type="match status" value="1"/>
</dbReference>
<dbReference type="SUPFAM" id="SSF50978">
    <property type="entry name" value="WD40 repeat-like"/>
    <property type="match status" value="1"/>
</dbReference>
<sequence length="817" mass="92953">MLRFPTCFPSFRVVGEKQLPQEIIFLVWSPKRDLIALANTAGEVLLHRLASFHRVWSFPPNENTGKEVTCLAWRPDGKLLAFALADTKKIVLCDVEKPGSLHSFSVEAPVSCMHWMEVTVESSVLTSFYNAEDESNLLLPKLPTLPKNYSSTSKIFSEENSDEIIKLLGDVRLNILVLGGSSGFIELYAYGMFKIARVTGIAGTCLALCLSSDLKSLSVVTEVSTNGASEVSYFQLETNLLYSFLPEVTRMARKFTHISALLQYINLSLTCMCEAWEEILMQMDSRLTKFVQEKNTTTSVQDEFMHLLLWGKASAELQTLLMNQLTVKGLKKLGQSIESSYSSIQKLVISHLQSGSESLLYHLSELKGLASWKQKYEPLGLDAAGIEEAITAVGSFILKANELLQVIDSSMKNFKAFFRWLYVAMLRMTEDHVLPELNKMTQKDITFVAEFLTEHFNEAPDLYNRKGKYFNVERVGQYLKDEDDDLVSPPNTEGNQWYDFLQNSSHLKESPLLFPYYPRKSLHFVKRRMENIIDQCLQKPADVIGKSMNQAICIPLYRDTRSEDSIRRLFKFPFLWNNKTSNLHYLLFTILEDSLYKMCILRRHTDISQSVSNGLIAIKFGSFTYATTEKVRRSIYSCLDAQFYDDETVTVVLKDTVGREGRDRLLVQLPLSLVYNSEDSAEYQFTGTYSTRLDEQCSAIPTRTMHFEKHWRLLESMKAQYVAGNGFRKVSCVLSSNLRHVRVFEMDIDDEWELDESSDEEEEASNKPVKIKEEVLSESEAENQQAGAAALAPEIVIKVEKLDPELDSQSSLPLLCV</sequence>
<accession>Q5RAQ5</accession>
<name>APC4_PONAB</name>
<feature type="chain" id="PRO_0000345958" description="Anaphase-promoting complex subunit 4">
    <location>
        <begin position="1"/>
        <end position="817"/>
    </location>
</feature>
<feature type="modified residue" description="Phosphotyrosine" evidence="1">
    <location>
        <position position="469"/>
    </location>
</feature>
<feature type="modified residue" description="Phosphoserine" evidence="1">
    <location>
        <position position="757"/>
    </location>
</feature>
<feature type="modified residue" description="Phosphoserine" evidence="1">
    <location>
        <position position="758"/>
    </location>
</feature>
<feature type="modified residue" description="Phosphoserine" evidence="1">
    <location>
        <position position="777"/>
    </location>
</feature>
<feature type="modified residue" description="Phosphoserine" evidence="1">
    <location>
        <position position="779"/>
    </location>
</feature>
<feature type="cross-link" description="Glycyl lysine isopeptide (Lys-Gly) (interchain with G-Cter in SUMO2)" evidence="1">
    <location>
        <position position="772"/>
    </location>
</feature>
<feature type="cross-link" description="Glycyl lysine isopeptide (Lys-Gly) (interchain with G-Cter in SUMO2)" evidence="1">
    <location>
        <position position="798"/>
    </location>
</feature>
<keyword id="KW-0131">Cell cycle</keyword>
<keyword id="KW-0132">Cell division</keyword>
<keyword id="KW-1017">Isopeptide bond</keyword>
<keyword id="KW-0498">Mitosis</keyword>
<keyword id="KW-0539">Nucleus</keyword>
<keyword id="KW-0597">Phosphoprotein</keyword>
<keyword id="KW-1185">Reference proteome</keyword>
<keyword id="KW-0832">Ubl conjugation</keyword>
<keyword id="KW-0833">Ubl conjugation pathway</keyword>
<reference key="1">
    <citation type="submission" date="2004-11" db="EMBL/GenBank/DDBJ databases">
        <authorList>
            <consortium name="The German cDNA consortium"/>
        </authorList>
    </citation>
    <scope>NUCLEOTIDE SEQUENCE [LARGE SCALE MRNA]</scope>
    <source>
        <tissue>Heart</tissue>
    </source>
</reference>